<proteinExistence type="inferred from homology"/>
<comment type="function">
    <text evidence="1">One of two assembly initiator proteins, it binds directly to the 5'-end of the 23S rRNA, where it nucleates assembly of the 50S subunit.</text>
</comment>
<comment type="function">
    <text evidence="1">One of the proteins that surrounds the polypeptide exit tunnel on the outside of the subunit.</text>
</comment>
<comment type="subunit">
    <text evidence="1">Part of the 50S ribosomal subunit.</text>
</comment>
<comment type="similarity">
    <text evidence="1">Belongs to the universal ribosomal protein uL24 family.</text>
</comment>
<gene>
    <name evidence="1" type="primary">rplX</name>
</gene>
<name>RL24_SPIKU</name>
<organism>
    <name type="scientific">Spiroplasma kunkelii</name>
    <dbReference type="NCBI Taxonomy" id="47834"/>
    <lineage>
        <taxon>Bacteria</taxon>
        <taxon>Bacillati</taxon>
        <taxon>Mycoplasmatota</taxon>
        <taxon>Mollicutes</taxon>
        <taxon>Entomoplasmatales</taxon>
        <taxon>Spiroplasmataceae</taxon>
        <taxon>Spiroplasma</taxon>
    </lineage>
</organism>
<reference key="1">
    <citation type="journal article" date="2003" name="Mol. Genet. Genomics">
        <title>Gene content and organization of an 85-kb DNA segment from the genome of the phytopathogenic mollicute Spiroplasma kunkelii.</title>
        <authorList>
            <person name="Zhao Y."/>
            <person name="Hammond R.W."/>
            <person name="Jomantiene R."/>
            <person name="Dally E.L."/>
            <person name="Lee I.-M."/>
            <person name="Jia H."/>
            <person name="Wu H."/>
            <person name="Lin S."/>
            <person name="Zhang P."/>
            <person name="Kenton S."/>
            <person name="Najar F.Z."/>
            <person name="Hua A."/>
            <person name="Roe B.A."/>
            <person name="Fletcher J."/>
            <person name="Davis R.E."/>
        </authorList>
    </citation>
    <scope>NUCLEOTIDE SEQUENCE [GENOMIC DNA]</scope>
    <source>
        <strain>CR2-3x</strain>
    </source>
</reference>
<dbReference type="EMBL" id="AY198133">
    <property type="protein sequence ID" value="AAP58902.1"/>
    <property type="molecule type" value="Genomic_DNA"/>
</dbReference>
<dbReference type="SMR" id="P60745"/>
<dbReference type="GO" id="GO:1990904">
    <property type="term" value="C:ribonucleoprotein complex"/>
    <property type="evidence" value="ECO:0007669"/>
    <property type="project" value="UniProtKB-KW"/>
</dbReference>
<dbReference type="GO" id="GO:0005840">
    <property type="term" value="C:ribosome"/>
    <property type="evidence" value="ECO:0007669"/>
    <property type="project" value="UniProtKB-KW"/>
</dbReference>
<dbReference type="GO" id="GO:0019843">
    <property type="term" value="F:rRNA binding"/>
    <property type="evidence" value="ECO:0007669"/>
    <property type="project" value="UniProtKB-UniRule"/>
</dbReference>
<dbReference type="GO" id="GO:0003735">
    <property type="term" value="F:structural constituent of ribosome"/>
    <property type="evidence" value="ECO:0007669"/>
    <property type="project" value="InterPro"/>
</dbReference>
<dbReference type="GO" id="GO:0006412">
    <property type="term" value="P:translation"/>
    <property type="evidence" value="ECO:0007669"/>
    <property type="project" value="UniProtKB-UniRule"/>
</dbReference>
<dbReference type="CDD" id="cd06089">
    <property type="entry name" value="KOW_RPL26"/>
    <property type="match status" value="1"/>
</dbReference>
<dbReference type="Gene3D" id="2.30.30.30">
    <property type="match status" value="1"/>
</dbReference>
<dbReference type="HAMAP" id="MF_01326_B">
    <property type="entry name" value="Ribosomal_uL24_B"/>
    <property type="match status" value="1"/>
</dbReference>
<dbReference type="InterPro" id="IPR005824">
    <property type="entry name" value="KOW"/>
</dbReference>
<dbReference type="InterPro" id="IPR014722">
    <property type="entry name" value="Rib_uL2_dom2"/>
</dbReference>
<dbReference type="InterPro" id="IPR003256">
    <property type="entry name" value="Ribosomal_uL24"/>
</dbReference>
<dbReference type="InterPro" id="IPR005825">
    <property type="entry name" value="Ribosomal_uL24_CS"/>
</dbReference>
<dbReference type="InterPro" id="IPR041988">
    <property type="entry name" value="Ribosomal_uL24_KOW"/>
</dbReference>
<dbReference type="InterPro" id="IPR008991">
    <property type="entry name" value="Translation_prot_SH3-like_sf"/>
</dbReference>
<dbReference type="NCBIfam" id="TIGR01079">
    <property type="entry name" value="rplX_bact"/>
    <property type="match status" value="1"/>
</dbReference>
<dbReference type="PANTHER" id="PTHR12903">
    <property type="entry name" value="MITOCHONDRIAL RIBOSOMAL PROTEIN L24"/>
    <property type="match status" value="1"/>
</dbReference>
<dbReference type="Pfam" id="PF00467">
    <property type="entry name" value="KOW"/>
    <property type="match status" value="1"/>
</dbReference>
<dbReference type="Pfam" id="PF17136">
    <property type="entry name" value="ribosomal_L24"/>
    <property type="match status" value="1"/>
</dbReference>
<dbReference type="SMART" id="SM00739">
    <property type="entry name" value="KOW"/>
    <property type="match status" value="1"/>
</dbReference>
<dbReference type="SUPFAM" id="SSF50104">
    <property type="entry name" value="Translation proteins SH3-like domain"/>
    <property type="match status" value="1"/>
</dbReference>
<dbReference type="PROSITE" id="PS01108">
    <property type="entry name" value="RIBOSOMAL_L24"/>
    <property type="match status" value="1"/>
</dbReference>
<accession>P60745</accession>
<evidence type="ECO:0000255" key="1">
    <source>
        <dbReference type="HAMAP-Rule" id="MF_01326"/>
    </source>
</evidence>
<evidence type="ECO:0000305" key="2"/>
<protein>
    <recommendedName>
        <fullName evidence="1">Large ribosomal subunit protein uL24</fullName>
    </recommendedName>
    <alternativeName>
        <fullName evidence="2">50S ribosomal protein L24</fullName>
    </alternativeName>
</protein>
<feature type="chain" id="PRO_0000130713" description="Large ribosomal subunit protein uL24">
    <location>
        <begin position="1"/>
        <end position="106"/>
    </location>
</feature>
<keyword id="KW-0687">Ribonucleoprotein</keyword>
<keyword id="KW-0689">Ribosomal protein</keyword>
<keyword id="KW-0694">RNA-binding</keyword>
<keyword id="KW-0699">rRNA-binding</keyword>
<sequence>MNKVKFKKGDLVKVIAGKHKGTEGPIIRVLREKSRVVIEGITNIKHVKPSQDNTEGGIQQVPASVHISNVALIDPKNKKEITKISYQIADNGKKVRIARKSKAHLA</sequence>